<proteinExistence type="inferred from homology"/>
<keyword id="KW-0067">ATP-binding</keyword>
<keyword id="KW-0131">Cell cycle</keyword>
<keyword id="KW-0132">Cell division</keyword>
<keyword id="KW-0133">Cell shape</keyword>
<keyword id="KW-0961">Cell wall biogenesis/degradation</keyword>
<keyword id="KW-0963">Cytoplasm</keyword>
<keyword id="KW-0436">Ligase</keyword>
<keyword id="KW-0547">Nucleotide-binding</keyword>
<keyword id="KW-0573">Peptidoglycan synthesis</keyword>
<keyword id="KW-1185">Reference proteome</keyword>
<name>MURC_NITWN</name>
<reference key="1">
    <citation type="journal article" date="2006" name="Appl. Environ. Microbiol.">
        <title>Genome sequence of the chemolithoautotrophic nitrite-oxidizing bacterium Nitrobacter winogradskyi Nb-255.</title>
        <authorList>
            <person name="Starkenburg S.R."/>
            <person name="Chain P.S.G."/>
            <person name="Sayavedra-Soto L.A."/>
            <person name="Hauser L."/>
            <person name="Land M.L."/>
            <person name="Larimer F.W."/>
            <person name="Malfatti S.A."/>
            <person name="Klotz M.G."/>
            <person name="Bottomley P.J."/>
            <person name="Arp D.J."/>
            <person name="Hickey W.J."/>
        </authorList>
    </citation>
    <scope>NUCLEOTIDE SEQUENCE [LARGE SCALE GENOMIC DNA]</scope>
    <source>
        <strain>ATCC 25391 / DSM 10237 / CIP 104748 / NCIMB 11846 / Nb-255</strain>
    </source>
</reference>
<sequence length="467" mass="49979">MRLPREIGPIHFVGIGGIGMSGIAEVLCNLGYTVQGSDASEGANVVRLREKGVKVTVGHKAGNVNGADVLVVSTAIKRDNPELMAARAQRIPVVRRAEMLAELMRLKSCVAIAGTHGKTTTTSMVATLLDAGDFDPTVINGGIINAYGTNARLGAGEWMVVEADESDGTFLKLPTDVAIVTNVDAEHLDHFKTFDAVQDAFRSFVENVPFYGFAVMCIDHPVVQAMVGRIEDRRIITYGQNPQADVRLVDLAPNGGGSHFKVMFRNRKTDAAHEISDLVLPMPGPHNALNATAAIAVAHELGITDATIRKALAAFGGVKRRFTRTGEWNGVTVIDDYGHHPVEIAAVLKAARESTDGRVIAVVQPHRYTRLQALFEEFCTCFNDADTVVVADVYPAGETPIVGIDRDHFVLGLRAHGHREVVPLPESAALAGIIADLAKQGDYVVCLGAGNITQWAYALPGELKALG</sequence>
<comment type="function">
    <text evidence="1">Cell wall formation.</text>
</comment>
<comment type="catalytic activity">
    <reaction evidence="1">
        <text>UDP-N-acetyl-alpha-D-muramate + L-alanine + ATP = UDP-N-acetyl-alpha-D-muramoyl-L-alanine + ADP + phosphate + H(+)</text>
        <dbReference type="Rhea" id="RHEA:23372"/>
        <dbReference type="ChEBI" id="CHEBI:15378"/>
        <dbReference type="ChEBI" id="CHEBI:30616"/>
        <dbReference type="ChEBI" id="CHEBI:43474"/>
        <dbReference type="ChEBI" id="CHEBI:57972"/>
        <dbReference type="ChEBI" id="CHEBI:70757"/>
        <dbReference type="ChEBI" id="CHEBI:83898"/>
        <dbReference type="ChEBI" id="CHEBI:456216"/>
        <dbReference type="EC" id="6.3.2.8"/>
    </reaction>
</comment>
<comment type="pathway">
    <text evidence="1">Cell wall biogenesis; peptidoglycan biosynthesis.</text>
</comment>
<comment type="subcellular location">
    <subcellularLocation>
        <location evidence="1">Cytoplasm</location>
    </subcellularLocation>
</comment>
<comment type="similarity">
    <text evidence="1">Belongs to the MurCDEF family.</text>
</comment>
<dbReference type="EC" id="6.3.2.8" evidence="1"/>
<dbReference type="EMBL" id="CP000115">
    <property type="protein sequence ID" value="ABA04314.1"/>
    <property type="molecule type" value="Genomic_DNA"/>
</dbReference>
<dbReference type="RefSeq" id="WP_011314348.1">
    <property type="nucleotide sequence ID" value="NC_007406.1"/>
</dbReference>
<dbReference type="SMR" id="Q3STS7"/>
<dbReference type="STRING" id="323098.Nwi_1052"/>
<dbReference type="KEGG" id="nwi:Nwi_1052"/>
<dbReference type="eggNOG" id="COG0773">
    <property type="taxonomic scope" value="Bacteria"/>
</dbReference>
<dbReference type="HOGENOM" id="CLU_028104_2_2_5"/>
<dbReference type="OrthoDB" id="9804126at2"/>
<dbReference type="UniPathway" id="UPA00219"/>
<dbReference type="Proteomes" id="UP000002531">
    <property type="component" value="Chromosome"/>
</dbReference>
<dbReference type="GO" id="GO:0005737">
    <property type="term" value="C:cytoplasm"/>
    <property type="evidence" value="ECO:0007669"/>
    <property type="project" value="UniProtKB-SubCell"/>
</dbReference>
<dbReference type="GO" id="GO:0005524">
    <property type="term" value="F:ATP binding"/>
    <property type="evidence" value="ECO:0007669"/>
    <property type="project" value="UniProtKB-UniRule"/>
</dbReference>
<dbReference type="GO" id="GO:0008763">
    <property type="term" value="F:UDP-N-acetylmuramate-L-alanine ligase activity"/>
    <property type="evidence" value="ECO:0007669"/>
    <property type="project" value="UniProtKB-UniRule"/>
</dbReference>
<dbReference type="GO" id="GO:0051301">
    <property type="term" value="P:cell division"/>
    <property type="evidence" value="ECO:0007669"/>
    <property type="project" value="UniProtKB-KW"/>
</dbReference>
<dbReference type="GO" id="GO:0071555">
    <property type="term" value="P:cell wall organization"/>
    <property type="evidence" value="ECO:0007669"/>
    <property type="project" value="UniProtKB-KW"/>
</dbReference>
<dbReference type="GO" id="GO:0009252">
    <property type="term" value="P:peptidoglycan biosynthetic process"/>
    <property type="evidence" value="ECO:0007669"/>
    <property type="project" value="UniProtKB-UniRule"/>
</dbReference>
<dbReference type="GO" id="GO:0008360">
    <property type="term" value="P:regulation of cell shape"/>
    <property type="evidence" value="ECO:0007669"/>
    <property type="project" value="UniProtKB-KW"/>
</dbReference>
<dbReference type="Gene3D" id="3.90.190.20">
    <property type="entry name" value="Mur ligase, C-terminal domain"/>
    <property type="match status" value="1"/>
</dbReference>
<dbReference type="Gene3D" id="3.40.1190.10">
    <property type="entry name" value="Mur-like, catalytic domain"/>
    <property type="match status" value="1"/>
</dbReference>
<dbReference type="Gene3D" id="3.40.50.720">
    <property type="entry name" value="NAD(P)-binding Rossmann-like Domain"/>
    <property type="match status" value="1"/>
</dbReference>
<dbReference type="HAMAP" id="MF_00046">
    <property type="entry name" value="MurC"/>
    <property type="match status" value="1"/>
</dbReference>
<dbReference type="InterPro" id="IPR036565">
    <property type="entry name" value="Mur-like_cat_sf"/>
</dbReference>
<dbReference type="InterPro" id="IPR004101">
    <property type="entry name" value="Mur_ligase_C"/>
</dbReference>
<dbReference type="InterPro" id="IPR036615">
    <property type="entry name" value="Mur_ligase_C_dom_sf"/>
</dbReference>
<dbReference type="InterPro" id="IPR013221">
    <property type="entry name" value="Mur_ligase_cen"/>
</dbReference>
<dbReference type="InterPro" id="IPR000713">
    <property type="entry name" value="Mur_ligase_N"/>
</dbReference>
<dbReference type="InterPro" id="IPR050061">
    <property type="entry name" value="MurCDEF_pg_biosynth"/>
</dbReference>
<dbReference type="InterPro" id="IPR005758">
    <property type="entry name" value="UDP-N-AcMur_Ala_ligase_MurC"/>
</dbReference>
<dbReference type="NCBIfam" id="TIGR01082">
    <property type="entry name" value="murC"/>
    <property type="match status" value="1"/>
</dbReference>
<dbReference type="PANTHER" id="PTHR43445:SF3">
    <property type="entry name" value="UDP-N-ACETYLMURAMATE--L-ALANINE LIGASE"/>
    <property type="match status" value="1"/>
</dbReference>
<dbReference type="PANTHER" id="PTHR43445">
    <property type="entry name" value="UDP-N-ACETYLMURAMATE--L-ALANINE LIGASE-RELATED"/>
    <property type="match status" value="1"/>
</dbReference>
<dbReference type="Pfam" id="PF01225">
    <property type="entry name" value="Mur_ligase"/>
    <property type="match status" value="1"/>
</dbReference>
<dbReference type="Pfam" id="PF02875">
    <property type="entry name" value="Mur_ligase_C"/>
    <property type="match status" value="1"/>
</dbReference>
<dbReference type="Pfam" id="PF08245">
    <property type="entry name" value="Mur_ligase_M"/>
    <property type="match status" value="1"/>
</dbReference>
<dbReference type="SUPFAM" id="SSF51984">
    <property type="entry name" value="MurCD N-terminal domain"/>
    <property type="match status" value="1"/>
</dbReference>
<dbReference type="SUPFAM" id="SSF53623">
    <property type="entry name" value="MurD-like peptide ligases, catalytic domain"/>
    <property type="match status" value="1"/>
</dbReference>
<dbReference type="SUPFAM" id="SSF53244">
    <property type="entry name" value="MurD-like peptide ligases, peptide-binding domain"/>
    <property type="match status" value="1"/>
</dbReference>
<gene>
    <name evidence="1" type="primary">murC</name>
    <name type="ordered locus">Nwi_1052</name>
</gene>
<organism>
    <name type="scientific">Nitrobacter winogradskyi (strain ATCC 25391 / DSM 10237 / CIP 104748 / NCIMB 11846 / Nb-255)</name>
    <dbReference type="NCBI Taxonomy" id="323098"/>
    <lineage>
        <taxon>Bacteria</taxon>
        <taxon>Pseudomonadati</taxon>
        <taxon>Pseudomonadota</taxon>
        <taxon>Alphaproteobacteria</taxon>
        <taxon>Hyphomicrobiales</taxon>
        <taxon>Nitrobacteraceae</taxon>
        <taxon>Nitrobacter</taxon>
    </lineage>
</organism>
<evidence type="ECO:0000255" key="1">
    <source>
        <dbReference type="HAMAP-Rule" id="MF_00046"/>
    </source>
</evidence>
<accession>Q3STS7</accession>
<feature type="chain" id="PRO_0000242567" description="UDP-N-acetylmuramate--L-alanine ligase">
    <location>
        <begin position="1"/>
        <end position="467"/>
    </location>
</feature>
<feature type="binding site" evidence="1">
    <location>
        <begin position="114"/>
        <end position="120"/>
    </location>
    <ligand>
        <name>ATP</name>
        <dbReference type="ChEBI" id="CHEBI:30616"/>
    </ligand>
</feature>
<protein>
    <recommendedName>
        <fullName evidence="1">UDP-N-acetylmuramate--L-alanine ligase</fullName>
        <ecNumber evidence="1">6.3.2.8</ecNumber>
    </recommendedName>
    <alternativeName>
        <fullName evidence="1">UDP-N-acetylmuramoyl-L-alanine synthetase</fullName>
    </alternativeName>
</protein>